<keyword id="KW-0067">ATP-binding</keyword>
<keyword id="KW-0963">Cytoplasm</keyword>
<keyword id="KW-0418">Kinase</keyword>
<keyword id="KW-0460">Magnesium</keyword>
<keyword id="KW-0479">Metal-binding</keyword>
<keyword id="KW-0547">Nucleotide-binding</keyword>
<keyword id="KW-0808">Transferase</keyword>
<organism>
    <name type="scientific">Streptococcus pyogenes serotype M12 (strain MGAS9429)</name>
    <dbReference type="NCBI Taxonomy" id="370551"/>
    <lineage>
        <taxon>Bacteria</taxon>
        <taxon>Bacillati</taxon>
        <taxon>Bacillota</taxon>
        <taxon>Bacilli</taxon>
        <taxon>Lactobacillales</taxon>
        <taxon>Streptococcaceae</taxon>
        <taxon>Streptococcus</taxon>
    </lineage>
</organism>
<dbReference type="EC" id="2.7.2.1" evidence="1"/>
<dbReference type="EMBL" id="CP000259">
    <property type="protein sequence ID" value="ABF31283.1"/>
    <property type="molecule type" value="Genomic_DNA"/>
</dbReference>
<dbReference type="RefSeq" id="WP_002987791.1">
    <property type="nucleotide sequence ID" value="NC_008021.1"/>
</dbReference>
<dbReference type="SMR" id="Q1JNW6"/>
<dbReference type="KEGG" id="spk:MGAS9429_Spy0095"/>
<dbReference type="HOGENOM" id="CLU_020352_0_1_9"/>
<dbReference type="UniPathway" id="UPA00340">
    <property type="reaction ID" value="UER00458"/>
</dbReference>
<dbReference type="Proteomes" id="UP000002433">
    <property type="component" value="Chromosome"/>
</dbReference>
<dbReference type="GO" id="GO:0005737">
    <property type="term" value="C:cytoplasm"/>
    <property type="evidence" value="ECO:0007669"/>
    <property type="project" value="UniProtKB-SubCell"/>
</dbReference>
<dbReference type="GO" id="GO:0008776">
    <property type="term" value="F:acetate kinase activity"/>
    <property type="evidence" value="ECO:0007669"/>
    <property type="project" value="UniProtKB-UniRule"/>
</dbReference>
<dbReference type="GO" id="GO:0005524">
    <property type="term" value="F:ATP binding"/>
    <property type="evidence" value="ECO:0007669"/>
    <property type="project" value="UniProtKB-KW"/>
</dbReference>
<dbReference type="GO" id="GO:0000287">
    <property type="term" value="F:magnesium ion binding"/>
    <property type="evidence" value="ECO:0007669"/>
    <property type="project" value="UniProtKB-UniRule"/>
</dbReference>
<dbReference type="GO" id="GO:0006083">
    <property type="term" value="P:acetate metabolic process"/>
    <property type="evidence" value="ECO:0007669"/>
    <property type="project" value="TreeGrafter"/>
</dbReference>
<dbReference type="GO" id="GO:0006085">
    <property type="term" value="P:acetyl-CoA biosynthetic process"/>
    <property type="evidence" value="ECO:0007669"/>
    <property type="project" value="UniProtKB-UniRule"/>
</dbReference>
<dbReference type="CDD" id="cd24010">
    <property type="entry name" value="ASKHA_NBD_AcK_PK"/>
    <property type="match status" value="1"/>
</dbReference>
<dbReference type="Gene3D" id="3.30.420.40">
    <property type="match status" value="2"/>
</dbReference>
<dbReference type="HAMAP" id="MF_00020">
    <property type="entry name" value="Acetate_kinase"/>
    <property type="match status" value="1"/>
</dbReference>
<dbReference type="InterPro" id="IPR004372">
    <property type="entry name" value="Ac/propionate_kinase"/>
</dbReference>
<dbReference type="InterPro" id="IPR000890">
    <property type="entry name" value="Aliphatic_acid_kin_short-chain"/>
</dbReference>
<dbReference type="InterPro" id="IPR023865">
    <property type="entry name" value="Aliphatic_acid_kinase_CS"/>
</dbReference>
<dbReference type="InterPro" id="IPR043129">
    <property type="entry name" value="ATPase_NBD"/>
</dbReference>
<dbReference type="NCBIfam" id="TIGR00016">
    <property type="entry name" value="ackA"/>
    <property type="match status" value="1"/>
</dbReference>
<dbReference type="PANTHER" id="PTHR21060">
    <property type="entry name" value="ACETATE KINASE"/>
    <property type="match status" value="1"/>
</dbReference>
<dbReference type="PANTHER" id="PTHR21060:SF15">
    <property type="entry name" value="ACETATE KINASE-RELATED"/>
    <property type="match status" value="1"/>
</dbReference>
<dbReference type="Pfam" id="PF00871">
    <property type="entry name" value="Acetate_kinase"/>
    <property type="match status" value="1"/>
</dbReference>
<dbReference type="PIRSF" id="PIRSF000722">
    <property type="entry name" value="Acetate_prop_kin"/>
    <property type="match status" value="1"/>
</dbReference>
<dbReference type="PRINTS" id="PR00471">
    <property type="entry name" value="ACETATEKNASE"/>
</dbReference>
<dbReference type="SUPFAM" id="SSF53067">
    <property type="entry name" value="Actin-like ATPase domain"/>
    <property type="match status" value="2"/>
</dbReference>
<dbReference type="PROSITE" id="PS01075">
    <property type="entry name" value="ACETATE_KINASE_1"/>
    <property type="match status" value="1"/>
</dbReference>
<dbReference type="PROSITE" id="PS01076">
    <property type="entry name" value="ACETATE_KINASE_2"/>
    <property type="match status" value="1"/>
</dbReference>
<protein>
    <recommendedName>
        <fullName evidence="1">Acetate kinase</fullName>
        <ecNumber evidence="1">2.7.2.1</ecNumber>
    </recommendedName>
    <alternativeName>
        <fullName evidence="1">Acetokinase</fullName>
    </alternativeName>
</protein>
<accession>Q1JNW6</accession>
<sequence>MSKTIAINAGSSSLKWQLYQMPEEEVLAQGIIERIGLKDSISTVKYDGKKEEQILDIHDHTEAVKILLNDLIHFGIIAAYDEITGVGHRVVAGGELFKESVVVNDKVLEQIEELSVLAPLHNPGAAAGIRAFRDILPDITSVCVFDTSFHTSMAKHTYLYPIPQKYYTDYKVRKYGAHGTSHKYVAQEAAKMLGRPLEELKLITAHIGNGVSITANYHGKSVDTSMGFTPLAGPMMGTRSGDIDPAIIPYLIEQDPELKDAADVVNMLNKKSGLSGVSGISSDMRDIEAGLQEDNPDAVLAYNIFIDRIKKCIGQYFAVLNGADALVFTAGMGENAPLMRQDVIGGLTWFGMDIDPEKNVFGYRGDISTPESKVKVLVISTDEELCIARDVERLKNTK</sequence>
<feature type="chain" id="PRO_1000002271" description="Acetate kinase">
    <location>
        <begin position="1"/>
        <end position="398"/>
    </location>
</feature>
<feature type="active site" description="Proton donor/acceptor" evidence="1">
    <location>
        <position position="146"/>
    </location>
</feature>
<feature type="binding site" evidence="1">
    <location>
        <position position="8"/>
    </location>
    <ligand>
        <name>Mg(2+)</name>
        <dbReference type="ChEBI" id="CHEBI:18420"/>
    </ligand>
</feature>
<feature type="binding site" evidence="1">
    <location>
        <position position="15"/>
    </location>
    <ligand>
        <name>ATP</name>
        <dbReference type="ChEBI" id="CHEBI:30616"/>
    </ligand>
</feature>
<feature type="binding site" evidence="1">
    <location>
        <position position="89"/>
    </location>
    <ligand>
        <name>substrate</name>
    </ligand>
</feature>
<feature type="binding site" evidence="1">
    <location>
        <begin position="206"/>
        <end position="210"/>
    </location>
    <ligand>
        <name>ATP</name>
        <dbReference type="ChEBI" id="CHEBI:30616"/>
    </ligand>
</feature>
<feature type="binding site" evidence="1">
    <location>
        <begin position="283"/>
        <end position="285"/>
    </location>
    <ligand>
        <name>ATP</name>
        <dbReference type="ChEBI" id="CHEBI:30616"/>
    </ligand>
</feature>
<feature type="binding site" evidence="1">
    <location>
        <begin position="331"/>
        <end position="335"/>
    </location>
    <ligand>
        <name>ATP</name>
        <dbReference type="ChEBI" id="CHEBI:30616"/>
    </ligand>
</feature>
<feature type="binding site" evidence="1">
    <location>
        <position position="383"/>
    </location>
    <ligand>
        <name>Mg(2+)</name>
        <dbReference type="ChEBI" id="CHEBI:18420"/>
    </ligand>
</feature>
<feature type="site" description="Transition state stabilizer" evidence="1">
    <location>
        <position position="178"/>
    </location>
</feature>
<feature type="site" description="Transition state stabilizer" evidence="1">
    <location>
        <position position="239"/>
    </location>
</feature>
<gene>
    <name evidence="1" type="primary">ackA</name>
    <name type="ordered locus">MGAS9429_Spy0095</name>
</gene>
<evidence type="ECO:0000255" key="1">
    <source>
        <dbReference type="HAMAP-Rule" id="MF_00020"/>
    </source>
</evidence>
<proteinExistence type="inferred from homology"/>
<comment type="function">
    <text evidence="1">Catalyzes the formation of acetyl phosphate from acetate and ATP. Can also catalyze the reverse reaction.</text>
</comment>
<comment type="catalytic activity">
    <reaction evidence="1">
        <text>acetate + ATP = acetyl phosphate + ADP</text>
        <dbReference type="Rhea" id="RHEA:11352"/>
        <dbReference type="ChEBI" id="CHEBI:22191"/>
        <dbReference type="ChEBI" id="CHEBI:30089"/>
        <dbReference type="ChEBI" id="CHEBI:30616"/>
        <dbReference type="ChEBI" id="CHEBI:456216"/>
        <dbReference type="EC" id="2.7.2.1"/>
    </reaction>
</comment>
<comment type="cofactor">
    <cofactor evidence="1">
        <name>Mg(2+)</name>
        <dbReference type="ChEBI" id="CHEBI:18420"/>
    </cofactor>
    <cofactor evidence="1">
        <name>Mn(2+)</name>
        <dbReference type="ChEBI" id="CHEBI:29035"/>
    </cofactor>
    <text evidence="1">Mg(2+). Can also accept Mn(2+).</text>
</comment>
<comment type="pathway">
    <text evidence="1">Metabolic intermediate biosynthesis; acetyl-CoA biosynthesis; acetyl-CoA from acetate: step 1/2.</text>
</comment>
<comment type="subunit">
    <text evidence="1">Homodimer.</text>
</comment>
<comment type="subcellular location">
    <subcellularLocation>
        <location evidence="1">Cytoplasm</location>
    </subcellularLocation>
</comment>
<comment type="similarity">
    <text evidence="1">Belongs to the acetokinase family.</text>
</comment>
<name>ACKA_STRPC</name>
<reference key="1">
    <citation type="journal article" date="2006" name="Proc. Natl. Acad. Sci. U.S.A.">
        <title>Molecular genetic anatomy of inter- and intraserotype variation in the human bacterial pathogen group A Streptococcus.</title>
        <authorList>
            <person name="Beres S.B."/>
            <person name="Richter E.W."/>
            <person name="Nagiec M.J."/>
            <person name="Sumby P."/>
            <person name="Porcella S.F."/>
            <person name="DeLeo F.R."/>
            <person name="Musser J.M."/>
        </authorList>
    </citation>
    <scope>NUCLEOTIDE SEQUENCE [LARGE SCALE GENOMIC DNA]</scope>
    <source>
        <strain>MGAS9429</strain>
    </source>
</reference>